<feature type="chain" id="PRO_0000199430" description="Myocyte-specific enhancer factor 2A homolog">
    <location>
        <begin position="1"/>
        <end position="516"/>
    </location>
</feature>
<feature type="domain" description="MADS-box" evidence="2">
    <location>
        <begin position="3"/>
        <end position="57"/>
    </location>
</feature>
<feature type="DNA-binding region" description="Mef2-type" evidence="1">
    <location>
        <begin position="58"/>
        <end position="86"/>
    </location>
</feature>
<feature type="region of interest" description="Interaction with hdac9">
    <location>
        <begin position="1"/>
        <end position="100"/>
    </location>
</feature>
<feature type="region of interest" description="Disordered" evidence="3">
    <location>
        <begin position="318"/>
        <end position="339"/>
    </location>
</feature>
<feature type="region of interest" description="Disordered" evidence="3">
    <location>
        <begin position="420"/>
        <end position="516"/>
    </location>
</feature>
<feature type="compositionally biased region" description="Polar residues" evidence="3">
    <location>
        <begin position="327"/>
        <end position="339"/>
    </location>
</feature>
<feature type="compositionally biased region" description="Polar residues" evidence="3">
    <location>
        <begin position="420"/>
        <end position="433"/>
    </location>
</feature>
<feature type="compositionally biased region" description="Low complexity" evidence="3">
    <location>
        <begin position="465"/>
        <end position="475"/>
    </location>
</feature>
<feature type="compositionally biased region" description="Basic and acidic residues" evidence="3">
    <location>
        <begin position="476"/>
        <end position="486"/>
    </location>
</feature>
<feature type="compositionally biased region" description="Basic and acidic residues" evidence="3">
    <location>
        <begin position="497"/>
        <end position="516"/>
    </location>
</feature>
<feature type="modified residue" description="Phosphothreonine; by NLK" evidence="6">
    <location>
        <position position="343"/>
    </location>
</feature>
<feature type="modified residue" description="Phosphoserine; by NLK" evidence="6">
    <location>
        <position position="386"/>
    </location>
</feature>
<feature type="mutagenesis site" description="Significantly reduces phosphorylation by NLK. Further reduces phosphorylation by NLK; when associated with A-386." evidence="6">
    <original>T</original>
    <variation>A</variation>
    <location>
        <position position="343"/>
    </location>
</feature>
<feature type="mutagenesis site" description="No effect on phosphorylation by NLK." evidence="6">
    <original>T</original>
    <variation>A</variation>
    <location>
        <position position="350"/>
    </location>
</feature>
<feature type="mutagenesis site" description="Significantly reduces phosphorylation by NLK. Further reduces phosphorylation by NLK; when associated with A-343." evidence="6">
    <original>S</original>
    <variation>A</variation>
    <location>
        <position position="386"/>
    </location>
</feature>
<feature type="mutagenesis site" description="No effect on phosphorylation by NLK." evidence="6">
    <original>S</original>
    <variation>A</variation>
    <location>
        <position position="439"/>
    </location>
</feature>
<feature type="sequence conflict" description="In Ref. 1; CAA79530." evidence="8" ref="1">
    <original>K</original>
    <variation>R</variation>
    <location>
        <position position="4"/>
    </location>
</feature>
<feature type="sequence conflict" description="In Ref. 2." evidence="8" ref="2">
    <original>T</original>
    <variation>I</variation>
    <location>
        <position position="9"/>
    </location>
</feature>
<feature type="sequence conflict" description="In Ref. 1; CAA79530." evidence="8" ref="1">
    <original>E</original>
    <variation>D</variation>
    <location>
        <position position="14"/>
    </location>
</feature>
<feature type="sequence conflict" description="In Ref. 1; CAA79530." evidence="8" ref="1">
    <original>R</original>
    <variation>K</variation>
    <location>
        <position position="17"/>
    </location>
</feature>
<feature type="sequence conflict" description="In Ref. 2." evidence="8" ref="2">
    <original>T</original>
    <variation>I</variation>
    <location>
        <position position="20"/>
    </location>
</feature>
<feature type="sequence conflict" description="In Ref. 3; AAH46368." evidence="8" ref="3">
    <original>P</original>
    <variation>T</variation>
    <location>
        <position position="194"/>
    </location>
</feature>
<comment type="function">
    <text evidence="6 7">May regulate muscle-specific transcription in the embryo and may regulate transcription of a variety of cell types in the adult. Binds to the sequence 5'-CTA[TA]4TAR-3'. Acts downstream of nlk2 in anterior neural development, including eye formation.</text>
</comment>
<comment type="subunit">
    <text evidence="4 6">Interacts with hdac9 and nlk2.</text>
</comment>
<comment type="subcellular location">
    <subcellularLocation>
        <location>Nucleus</location>
    </subcellularLocation>
</comment>
<comment type="tissue specificity">
    <text evidence="5 6 7">Restricted to the somitic mesoderm of early embryos. Expressed in the head region of neurula stage embryos and in body muscle (myotomes) of the tadpole. Expressed in all tissues examined in the adult.</text>
</comment>
<comment type="developmental stage">
    <text evidence="5 6">Expressed both maternally and zygotically. Zygotic expression begins after the neurula stage.</text>
</comment>
<comment type="similarity">
    <text evidence="8">Belongs to the MEF2 family.</text>
</comment>
<comment type="sequence caution" evidence="8">
    <conflict type="frameshift">
        <sequence resource="EMBL-CDS" id="CAA79530"/>
    </conflict>
</comment>
<keyword id="KW-0010">Activator</keyword>
<keyword id="KW-0217">Developmental protein</keyword>
<keyword id="KW-0238">DNA-binding</keyword>
<keyword id="KW-0539">Nucleus</keyword>
<keyword id="KW-0597">Phosphoprotein</keyword>
<keyword id="KW-1185">Reference proteome</keyword>
<keyword id="KW-0804">Transcription</keyword>
<keyword id="KW-0805">Transcription regulation</keyword>
<gene>
    <name type="primary">mef2a</name>
    <name type="synonym">sl2</name>
</gene>
<proteinExistence type="evidence at protein level"/>
<evidence type="ECO:0000255" key="1"/>
<evidence type="ECO:0000255" key="2">
    <source>
        <dbReference type="PROSITE-ProRule" id="PRU00251"/>
    </source>
</evidence>
<evidence type="ECO:0000256" key="3">
    <source>
        <dbReference type="SAM" id="MobiDB-lite"/>
    </source>
</evidence>
<evidence type="ECO:0000269" key="4">
    <source>
    </source>
</evidence>
<evidence type="ECO:0000269" key="5">
    <source>
    </source>
</evidence>
<evidence type="ECO:0000269" key="6">
    <source>
    </source>
</evidence>
<evidence type="ECO:0000269" key="7">
    <source>
    </source>
</evidence>
<evidence type="ECO:0000305" key="8"/>
<reference key="1">
    <citation type="journal article" date="1992" name="EMBO J.">
        <title>Muscle-specific expression of SRF-related genes in the early embryo of Xenopus laevis.</title>
        <authorList>
            <person name="Chambers A.E."/>
            <person name="Kotecha S."/>
            <person name="Towers N."/>
            <person name="Mohun T.J."/>
        </authorList>
    </citation>
    <scope>NUCLEOTIDE SEQUENCE [MRNA]</scope>
    <scope>TISSUE SPECIFICITY</scope>
    <scope>DEVELOPMENTAL STAGE</scope>
    <source>
        <tissue>Neurula</tissue>
    </source>
</reference>
<reference key="2">
    <citation type="journal article" date="1994" name="Dev. Biol.">
        <title>Activation of Xenopus MyoD transcription by members of the MEF2 protein family.</title>
        <authorList>
            <person name="Wong M.-W."/>
            <person name="Pisegna M."/>
            <person name="Lu M.-F."/>
            <person name="Leibham D."/>
            <person name="Perry M."/>
        </authorList>
    </citation>
    <scope>NUCLEOTIDE SEQUENCE [MRNA]</scope>
    <scope>FUNCTION</scope>
    <scope>DNA-BINDING</scope>
    <scope>TISSUE SPECIFICITY</scope>
    <source>
        <tissue>Tail bud</tissue>
    </source>
</reference>
<reference key="3">
    <citation type="submission" date="2003-02" db="EMBL/GenBank/DDBJ databases">
        <authorList>
            <consortium name="NIH - Xenopus Gene Collection (XGC) project"/>
        </authorList>
    </citation>
    <scope>NUCLEOTIDE SEQUENCE [LARGE SCALE MRNA]</scope>
    <source>
        <tissue>Tail bud</tissue>
    </source>
</reference>
<reference key="4">
    <citation type="journal article" date="1999" name="EMBO J.">
        <title>MEF-2 function is modified by a novel co-repressor, MITR.</title>
        <authorList>
            <person name="Sparrow D.B."/>
            <person name="Miska E.A."/>
            <person name="Langley E."/>
            <person name="Reynaud-Deonauth S."/>
            <person name="Kotecha S."/>
            <person name="Towers N."/>
            <person name="Spohr G."/>
            <person name="Kouzarides T."/>
            <person name="Mohun T.J."/>
        </authorList>
    </citation>
    <scope>INTERACTION WITH HDAC9</scope>
</reference>
<reference key="5">
    <citation type="journal article" date="2007" name="Mol. Cell. Biol.">
        <title>Nemo-like kinase-myocyte enhancer factor 2A signaling regulates anterior formation in Xenopus development.</title>
        <authorList>
            <person name="Satoh K."/>
            <person name="Ohnishi J."/>
            <person name="Sato A."/>
            <person name="Takeyama M."/>
            <person name="Iemura S."/>
            <person name="Natsume T."/>
            <person name="Shibuya H."/>
        </authorList>
    </citation>
    <scope>FUNCTION</scope>
    <scope>INTERACTION WITH NLK2</scope>
    <scope>TISSUE SPECIFICITY</scope>
    <scope>DEVELOPMENTAL STAGE</scope>
    <scope>PHOSPHORYLATION AT THR-343 AND SER-386 BY NLK2</scope>
    <scope>MUTAGENESIS OF THR-343; THR-350; SER-386 AND SER-439</scope>
</reference>
<sequence length="516" mass="56346">MGRKKIQITRIMDERNRQVTFTKRKFGLMKKAYELSVLCDCEIALIIFNSSNKLFQYASTDMDKVLLKYTEYNEPHESRTNSDIVETLRKKGLNGCESPDDQRYFEEETFSKLIEDSDFVFKRDPALNKKENRGCDSPDPDGSYVLTPHTEEKYKKINEEFDNMMRSHKISPGLPQQTFPMSVTVPVSNPNTLPYSSPGNTMVTASLAASASLTDARMLSPPPTTLHRNVVSPGLPQRPPSTGNAGVMLCSSDLSVPNGAGTSPVGNGFVNPRASPSHLGPTGGNVLGKVMPTKSPPPPGGNLVMNSRKPDLRVVIPPSSKGMMPPLNTQRVTSSQGTQPLATPIVSVATPSLAPQGLIYSAMPTAYNTDYPLTSADLSMLQGFNSPGILPLGQVSAWQQHHVGQAALSSFVATGQLSQGSNLSINTNQNINIKSEPISPPRDRITPSGFQSHQHHQHQPRPEMDSLSSSSSSYDGSDREDVRNDFHSPIGLGRPANNEDRDSPSVKRMRMDAWVT</sequence>
<dbReference type="EMBL" id="Z19123">
    <property type="protein sequence ID" value="CAA79530.1"/>
    <property type="status" value="ALT_FRAME"/>
    <property type="molecule type" value="mRNA"/>
</dbReference>
<dbReference type="EMBL" id="BC046368">
    <property type="protein sequence ID" value="AAH46368.1"/>
    <property type="molecule type" value="mRNA"/>
</dbReference>
<dbReference type="PIR" id="S28060">
    <property type="entry name" value="S28060"/>
</dbReference>
<dbReference type="RefSeq" id="NP_001095216.1">
    <property type="nucleotide sequence ID" value="NM_001101746.1"/>
</dbReference>
<dbReference type="SMR" id="Q03414"/>
<dbReference type="iPTMnet" id="Q03414"/>
<dbReference type="DNASU" id="380452"/>
<dbReference type="GeneID" id="380452"/>
<dbReference type="KEGG" id="xla:380452"/>
<dbReference type="AGR" id="Xenbase:XB-GENE-487398"/>
<dbReference type="CTD" id="380452"/>
<dbReference type="Xenbase" id="XB-GENE-487398">
    <property type="gene designation" value="mef2a.L"/>
</dbReference>
<dbReference type="OrthoDB" id="1898716at2759"/>
<dbReference type="Proteomes" id="UP000186698">
    <property type="component" value="Chromosome 3L"/>
</dbReference>
<dbReference type="Bgee" id="380452">
    <property type="expression patterns" value="Expressed in heart and 19 other cell types or tissues"/>
</dbReference>
<dbReference type="GO" id="GO:0005634">
    <property type="term" value="C:nucleus"/>
    <property type="evidence" value="ECO:0000305"/>
    <property type="project" value="UniProtKB"/>
</dbReference>
<dbReference type="GO" id="GO:0000981">
    <property type="term" value="F:DNA-binding transcription factor activity, RNA polymerase II-specific"/>
    <property type="evidence" value="ECO:0000318"/>
    <property type="project" value="GO_Central"/>
</dbReference>
<dbReference type="GO" id="GO:0042826">
    <property type="term" value="F:histone deacetylase binding"/>
    <property type="evidence" value="ECO:0000318"/>
    <property type="project" value="GO_Central"/>
</dbReference>
<dbReference type="GO" id="GO:0046983">
    <property type="term" value="F:protein dimerization activity"/>
    <property type="evidence" value="ECO:0007669"/>
    <property type="project" value="InterPro"/>
</dbReference>
<dbReference type="GO" id="GO:0019901">
    <property type="term" value="F:protein kinase binding"/>
    <property type="evidence" value="ECO:0000353"/>
    <property type="project" value="UniProtKB"/>
</dbReference>
<dbReference type="GO" id="GO:0000978">
    <property type="term" value="F:RNA polymerase II cis-regulatory region sequence-specific DNA binding"/>
    <property type="evidence" value="ECO:0000318"/>
    <property type="project" value="GO_Central"/>
</dbReference>
<dbReference type="GO" id="GO:0043565">
    <property type="term" value="F:sequence-specific DNA binding"/>
    <property type="evidence" value="ECO:0000314"/>
    <property type="project" value="UniProtKB"/>
</dbReference>
<dbReference type="GO" id="GO:0009952">
    <property type="term" value="P:anterior/posterior pattern specification"/>
    <property type="evidence" value="ECO:0000315"/>
    <property type="project" value="UniProtKB"/>
</dbReference>
<dbReference type="GO" id="GO:0030154">
    <property type="term" value="P:cell differentiation"/>
    <property type="evidence" value="ECO:0000318"/>
    <property type="project" value="GO_Central"/>
</dbReference>
<dbReference type="GO" id="GO:0045944">
    <property type="term" value="P:positive regulation of transcription by RNA polymerase II"/>
    <property type="evidence" value="ECO:0000315"/>
    <property type="project" value="UniProtKB"/>
</dbReference>
<dbReference type="CDD" id="cd00265">
    <property type="entry name" value="MADS_MEF2_like"/>
    <property type="match status" value="1"/>
</dbReference>
<dbReference type="FunFam" id="3.40.1810.10:FF:000001">
    <property type="entry name" value="Myocyte-specific enhancer factor 2A homolog"/>
    <property type="match status" value="1"/>
</dbReference>
<dbReference type="Gene3D" id="3.40.1810.10">
    <property type="entry name" value="Transcription factor, MADS-box"/>
    <property type="match status" value="1"/>
</dbReference>
<dbReference type="InterPro" id="IPR022102">
    <property type="entry name" value="HJURP_C"/>
</dbReference>
<dbReference type="InterPro" id="IPR033896">
    <property type="entry name" value="MEF2-like_N"/>
</dbReference>
<dbReference type="InterPro" id="IPR002100">
    <property type="entry name" value="TF_MADSbox"/>
</dbReference>
<dbReference type="InterPro" id="IPR036879">
    <property type="entry name" value="TF_MADSbox_sf"/>
</dbReference>
<dbReference type="PANTHER" id="PTHR11945">
    <property type="entry name" value="MADS BOX PROTEIN"/>
    <property type="match status" value="1"/>
</dbReference>
<dbReference type="PANTHER" id="PTHR11945:SF637">
    <property type="entry name" value="MYOCYTE-SPECIFIC ENHANCER FACTOR 2A"/>
    <property type="match status" value="1"/>
</dbReference>
<dbReference type="Pfam" id="PF12347">
    <property type="entry name" value="HJURP_C"/>
    <property type="match status" value="1"/>
</dbReference>
<dbReference type="Pfam" id="PF00319">
    <property type="entry name" value="SRF-TF"/>
    <property type="match status" value="1"/>
</dbReference>
<dbReference type="PRINTS" id="PR00404">
    <property type="entry name" value="MADSDOMAIN"/>
</dbReference>
<dbReference type="SMART" id="SM00432">
    <property type="entry name" value="MADS"/>
    <property type="match status" value="1"/>
</dbReference>
<dbReference type="SUPFAM" id="SSF55455">
    <property type="entry name" value="SRF-like"/>
    <property type="match status" value="1"/>
</dbReference>
<dbReference type="PROSITE" id="PS00350">
    <property type="entry name" value="MADS_BOX_1"/>
    <property type="match status" value="1"/>
</dbReference>
<dbReference type="PROSITE" id="PS50066">
    <property type="entry name" value="MADS_BOX_2"/>
    <property type="match status" value="1"/>
</dbReference>
<protein>
    <recommendedName>
        <fullName>Myocyte-specific enhancer factor 2A homolog</fullName>
        <shortName>XMEF2A1</shortName>
        <shortName>xMEF2A</shortName>
    </recommendedName>
    <alternativeName>
        <fullName>Serum response factor-like protein 2</fullName>
        <shortName>SL-2</shortName>
    </alternativeName>
</protein>
<accession>Q03414</accession>
<accession>Q7ZX04</accession>
<accession>Q9PSD9</accession>
<organism>
    <name type="scientific">Xenopus laevis</name>
    <name type="common">African clawed frog</name>
    <dbReference type="NCBI Taxonomy" id="8355"/>
    <lineage>
        <taxon>Eukaryota</taxon>
        <taxon>Metazoa</taxon>
        <taxon>Chordata</taxon>
        <taxon>Craniata</taxon>
        <taxon>Vertebrata</taxon>
        <taxon>Euteleostomi</taxon>
        <taxon>Amphibia</taxon>
        <taxon>Batrachia</taxon>
        <taxon>Anura</taxon>
        <taxon>Pipoidea</taxon>
        <taxon>Pipidae</taxon>
        <taxon>Xenopodinae</taxon>
        <taxon>Xenopus</taxon>
        <taxon>Xenopus</taxon>
    </lineage>
</organism>
<name>MEF2A_XENLA</name>